<sequence length="705" mass="75198">MRNGNLAGLLAEQASEAGWYDRPAFYAADVVTHGQIHDGAARLGEVLRNRGLSSGDRVLLCLPDSPDLVQLLLACLARGVMAFLANPELHRDDHALAARNTEPALVVTSDALRDRFQPSRVAEAAELMSEAARVAPGGYEPMGGDALAYATYTSGTTGPPKAAIHRHADPLTFVDAMCRKALRLTPEDTGLCSARMYFAYGLGNSVWFPLATGGSAVINSAPVTPEAAAILSARFGPSVLYGVPNFFARVIDSCSPDSFRSLRCVVSAGEALELGLAERLMEFFGGIPILDGIGSTEVGQTFVSNRVDEWRLGTLGRVLPPYEIRVVAPDGTTAGPGVEGDLWVRGPAIAKGYWNRPDSPVANEGWLDTRDRVCIDSDGWVTYRCRADDTEVIGGVNVDPREVERLIIEDEAVAEAAVVAVRESTGASTLQAFLVATSGATIDGSVMRDLHRGLLNRLSAFKVPHRFAVVDRLPRTPNGKLVRGALRKQSPTKPIWELSLTEPGSGVRAQRDDLSASNMTIAGGNDGGATLRERLVALRQERQRLVVDAVCAEAAKMLGEPDPWSVDQDLAFSELGFDSQMTVTLCKRLAAVTGLRLPETVGWDYGSISGLAQYLEAELAGGHGRLKSAGPVNSGATGLWAIEEQLNKVEELVAVIADGEKQRVADRLRALLGTIAGSEAGLGKLIQAASTPDEIFQLIDSELGK</sequence>
<organism>
    <name type="scientific">Mycobacterium tuberculosis (strain CDC 1551 / Oshkosh)</name>
    <dbReference type="NCBI Taxonomy" id="83331"/>
    <lineage>
        <taxon>Bacteria</taxon>
        <taxon>Bacillati</taxon>
        <taxon>Actinomycetota</taxon>
        <taxon>Actinomycetes</taxon>
        <taxon>Mycobacteriales</taxon>
        <taxon>Mycobacteriaceae</taxon>
        <taxon>Mycobacterium</taxon>
        <taxon>Mycobacterium tuberculosis complex</taxon>
    </lineage>
</organism>
<protein>
    <recommendedName>
        <fullName>p-hydroxybenzoic acid--AMP ligase FadD22</fullName>
        <shortName>p-HB--AMP ligase FadD22</shortName>
        <ecNumber evidence="2">6.2.1.50</ecNumber>
    </recommendedName>
    <alternativeName>
        <fullName>p-hydroxybenzoic acid-AMP synthetase</fullName>
        <shortName>p-HB-AMP synthetase</shortName>
    </alternativeName>
</protein>
<feature type="chain" id="PRO_0000426832" description="p-hydroxybenzoic acid--AMP ligase FadD22">
    <location>
        <begin position="1"/>
        <end position="705"/>
    </location>
</feature>
<feature type="domain" description="Carrier" evidence="3">
    <location>
        <begin position="541"/>
        <end position="619"/>
    </location>
</feature>
<feature type="modified residue" description="O-(pantetheine 4'-phosphoryl)serine" evidence="3">
    <location>
        <position position="579"/>
    </location>
</feature>
<keyword id="KW-0276">Fatty acid metabolism</keyword>
<keyword id="KW-0436">Ligase</keyword>
<keyword id="KW-0443">Lipid metabolism</keyword>
<keyword id="KW-0596">Phosphopantetheine</keyword>
<keyword id="KW-0597">Phosphoprotein</keyword>
<keyword id="KW-1185">Reference proteome</keyword>
<dbReference type="EC" id="6.2.1.50" evidence="2"/>
<dbReference type="EMBL" id="AE000516">
    <property type="protein sequence ID" value="AAK47347.1"/>
    <property type="molecule type" value="Genomic_DNA"/>
</dbReference>
<dbReference type="PIR" id="A70669">
    <property type="entry name" value="A70669"/>
</dbReference>
<dbReference type="RefSeq" id="WP_003414884.1">
    <property type="nucleotide sequence ID" value="NZ_KK341227.1"/>
</dbReference>
<dbReference type="SMR" id="P9WQ60"/>
<dbReference type="KEGG" id="mtc:MT3021"/>
<dbReference type="PATRIC" id="fig|83331.31.peg.3261"/>
<dbReference type="HOGENOM" id="CLU_000022_59_10_11"/>
<dbReference type="UniPathway" id="UPA00094"/>
<dbReference type="Proteomes" id="UP000001020">
    <property type="component" value="Chromosome"/>
</dbReference>
<dbReference type="GO" id="GO:0016878">
    <property type="term" value="F:acid-thiol ligase activity"/>
    <property type="evidence" value="ECO:0007669"/>
    <property type="project" value="TreeGrafter"/>
</dbReference>
<dbReference type="GO" id="GO:0031177">
    <property type="term" value="F:phosphopantetheine binding"/>
    <property type="evidence" value="ECO:0007669"/>
    <property type="project" value="InterPro"/>
</dbReference>
<dbReference type="GO" id="GO:0006633">
    <property type="term" value="P:fatty acid biosynthetic process"/>
    <property type="evidence" value="ECO:0007669"/>
    <property type="project" value="UniProtKB-UniPathway"/>
</dbReference>
<dbReference type="GO" id="GO:0044550">
    <property type="term" value="P:secondary metabolite biosynthetic process"/>
    <property type="evidence" value="ECO:0007669"/>
    <property type="project" value="TreeGrafter"/>
</dbReference>
<dbReference type="CDD" id="cd05919">
    <property type="entry name" value="BCL_like"/>
    <property type="match status" value="1"/>
</dbReference>
<dbReference type="FunFam" id="3.30.300.30:FF:000042">
    <property type="entry name" value="Fatty-acid-CoA ligase FadD22"/>
    <property type="match status" value="1"/>
</dbReference>
<dbReference type="FunFam" id="3.40.50.12780:FF:000055">
    <property type="entry name" value="Fatty-acid-CoA ligase FadD22"/>
    <property type="match status" value="1"/>
</dbReference>
<dbReference type="FunFam" id="1.10.1200.10:FF:000007">
    <property type="entry name" value="Probable polyketide synthase pks17"/>
    <property type="match status" value="1"/>
</dbReference>
<dbReference type="Gene3D" id="3.30.300.30">
    <property type="match status" value="1"/>
</dbReference>
<dbReference type="Gene3D" id="1.10.1200.10">
    <property type="entry name" value="ACP-like"/>
    <property type="match status" value="1"/>
</dbReference>
<dbReference type="Gene3D" id="3.40.50.12780">
    <property type="entry name" value="N-terminal domain of ligase-like"/>
    <property type="match status" value="1"/>
</dbReference>
<dbReference type="InterPro" id="IPR036736">
    <property type="entry name" value="ACP-like_sf"/>
</dbReference>
<dbReference type="InterPro" id="IPR025110">
    <property type="entry name" value="AMP-bd_C"/>
</dbReference>
<dbReference type="InterPro" id="IPR045851">
    <property type="entry name" value="AMP-bd_C_sf"/>
</dbReference>
<dbReference type="InterPro" id="IPR000873">
    <property type="entry name" value="AMP-dep_synth/lig_dom"/>
</dbReference>
<dbReference type="InterPro" id="IPR042099">
    <property type="entry name" value="ANL_N_sf"/>
</dbReference>
<dbReference type="InterPro" id="IPR020806">
    <property type="entry name" value="PKS_PP-bd"/>
</dbReference>
<dbReference type="InterPro" id="IPR009081">
    <property type="entry name" value="PP-bd_ACP"/>
</dbReference>
<dbReference type="NCBIfam" id="NF004716">
    <property type="entry name" value="PRK06060.1"/>
    <property type="match status" value="1"/>
</dbReference>
<dbReference type="PANTHER" id="PTHR43352">
    <property type="entry name" value="ACETYL-COA SYNTHETASE"/>
    <property type="match status" value="1"/>
</dbReference>
<dbReference type="PANTHER" id="PTHR43352:SF1">
    <property type="entry name" value="ANTHRANILATE--COA LIGASE"/>
    <property type="match status" value="1"/>
</dbReference>
<dbReference type="Pfam" id="PF00501">
    <property type="entry name" value="AMP-binding"/>
    <property type="match status" value="1"/>
</dbReference>
<dbReference type="Pfam" id="PF13193">
    <property type="entry name" value="AMP-binding_C"/>
    <property type="match status" value="1"/>
</dbReference>
<dbReference type="Pfam" id="PF00550">
    <property type="entry name" value="PP-binding"/>
    <property type="match status" value="1"/>
</dbReference>
<dbReference type="SMART" id="SM00823">
    <property type="entry name" value="PKS_PP"/>
    <property type="match status" value="1"/>
</dbReference>
<dbReference type="SUPFAM" id="SSF56801">
    <property type="entry name" value="Acetyl-CoA synthetase-like"/>
    <property type="match status" value="1"/>
</dbReference>
<dbReference type="SUPFAM" id="SSF47336">
    <property type="entry name" value="ACP-like"/>
    <property type="match status" value="1"/>
</dbReference>
<dbReference type="PROSITE" id="PS50075">
    <property type="entry name" value="CARRIER"/>
    <property type="match status" value="1"/>
</dbReference>
<accession>P9WQ60</accession>
<accession>L0TE13</accession>
<accession>P96283</accession>
<accession>Q7D6D9</accession>
<comment type="function">
    <text evidence="1">Catalyzes the adenylation of p-hydroxybenzoic acid (pHBA) to form p-hydroxybenzoic acid-AMP (pHBA-AMP), which is converted directly to p-hydroxybenzoyl-S-FadD22 (pHBA-S-FAdD22) thioester intermediate in a CoA-independent manner by attack of the phosphopantetheine thiol of FadD22. Usually, this intermediate primes the biosynthesis of the phenolphthiocerol (PPOL) by presenting the pHBA starter unit for elongation by Pks15/1, but M.tuberculosis lacks Pks15/1 due to a natural frameshift and thus is unable to produce PPOL.</text>
</comment>
<comment type="catalytic activity">
    <reaction evidence="2">
        <text>holo-[4-hydroxyphenylalkanoate synthase] + 4-hydroxybenzoate + ATP = 4-hydroxyphenyl-[4-hydroxyphenylalkanoate synthase] + AMP + diphosphate</text>
        <dbReference type="Rhea" id="RHEA:54696"/>
        <dbReference type="Rhea" id="RHEA-COMP:12684"/>
        <dbReference type="Rhea" id="RHEA-COMP:13969"/>
        <dbReference type="ChEBI" id="CHEBI:17879"/>
        <dbReference type="ChEBI" id="CHEBI:30616"/>
        <dbReference type="ChEBI" id="CHEBI:33019"/>
        <dbReference type="ChEBI" id="CHEBI:64479"/>
        <dbReference type="ChEBI" id="CHEBI:138321"/>
        <dbReference type="ChEBI" id="CHEBI:456215"/>
        <dbReference type="EC" id="6.2.1.50"/>
    </reaction>
</comment>
<comment type="pathway">
    <text>Lipid metabolism; fatty acid biosynthesis.</text>
</comment>
<comment type="similarity">
    <text evidence="4">Belongs to the ATP-dependent AMP-binding enzyme family.</text>
</comment>
<name>FAA22_MYCTO</name>
<evidence type="ECO:0000250" key="1">
    <source>
        <dbReference type="UniProtKB" id="P9WQ61"/>
    </source>
</evidence>
<evidence type="ECO:0000250" key="2">
    <source>
        <dbReference type="UniProtKB" id="Q7TXK7"/>
    </source>
</evidence>
<evidence type="ECO:0000255" key="3">
    <source>
        <dbReference type="PROSITE-ProRule" id="PRU00258"/>
    </source>
</evidence>
<evidence type="ECO:0000305" key="4"/>
<proteinExistence type="inferred from homology"/>
<reference key="1">
    <citation type="journal article" date="2002" name="J. Bacteriol.">
        <title>Whole-genome comparison of Mycobacterium tuberculosis clinical and laboratory strains.</title>
        <authorList>
            <person name="Fleischmann R.D."/>
            <person name="Alland D."/>
            <person name="Eisen J.A."/>
            <person name="Carpenter L."/>
            <person name="White O."/>
            <person name="Peterson J.D."/>
            <person name="DeBoy R.T."/>
            <person name="Dodson R.J."/>
            <person name="Gwinn M.L."/>
            <person name="Haft D.H."/>
            <person name="Hickey E.K."/>
            <person name="Kolonay J.F."/>
            <person name="Nelson W.C."/>
            <person name="Umayam L.A."/>
            <person name="Ermolaeva M.D."/>
            <person name="Salzberg S.L."/>
            <person name="Delcher A."/>
            <person name="Utterback T.R."/>
            <person name="Weidman J.F."/>
            <person name="Khouri H.M."/>
            <person name="Gill J."/>
            <person name="Mikula A."/>
            <person name="Bishai W."/>
            <person name="Jacobs W.R. Jr."/>
            <person name="Venter J.C."/>
            <person name="Fraser C.M."/>
        </authorList>
    </citation>
    <scope>NUCLEOTIDE SEQUENCE [LARGE SCALE GENOMIC DNA]</scope>
    <source>
        <strain>CDC 1551 / Oshkosh</strain>
    </source>
</reference>
<gene>
    <name type="primary">fadD22</name>
    <name type="ordered locus">MT3021</name>
</gene>